<comment type="function">
    <text evidence="1">DEAD-box RNA helicase-like protein required for pre-18S rRNA processing, specifically at sites A0, A1, and A2.</text>
</comment>
<comment type="subunit">
    <text evidence="1">Component of the ribosomal small subunit (SSU) processome composed of at least 40 protein subunits and snoRNA U3.</text>
</comment>
<comment type="subcellular location">
    <subcellularLocation>
        <location evidence="1">Nucleus</location>
        <location evidence="1">Nucleolus</location>
    </subcellularLocation>
</comment>
<comment type="similarity">
    <text evidence="3">Belongs to the UTP25 family.</text>
</comment>
<protein>
    <recommendedName>
        <fullName>U3 small nucleolar RNA-associated protein 25</fullName>
        <shortName>U3 snoRNA-associated protein 25</shortName>
    </recommendedName>
    <alternativeName>
        <fullName>U three protein 25</fullName>
    </alternativeName>
</protein>
<gene>
    <name type="primary">UTP25</name>
    <name type="ORF">MCYG_08503</name>
</gene>
<accession>C5G0N1</accession>
<organism>
    <name type="scientific">Arthroderma otae (strain ATCC MYA-4605 / CBS 113480)</name>
    <name type="common">Microsporum canis</name>
    <dbReference type="NCBI Taxonomy" id="554155"/>
    <lineage>
        <taxon>Eukaryota</taxon>
        <taxon>Fungi</taxon>
        <taxon>Dikarya</taxon>
        <taxon>Ascomycota</taxon>
        <taxon>Pezizomycotina</taxon>
        <taxon>Eurotiomycetes</taxon>
        <taxon>Eurotiomycetidae</taxon>
        <taxon>Onygenales</taxon>
        <taxon>Arthrodermataceae</taxon>
        <taxon>Microsporum</taxon>
    </lineage>
</organism>
<reference key="1">
    <citation type="journal article" date="2012" name="MBio">
        <title>Comparative genome analysis of Trichophyton rubrum and related dermatophytes reveals candidate genes involved in infection.</title>
        <authorList>
            <person name="Martinez D.A."/>
            <person name="Oliver B.G."/>
            <person name="Graeser Y."/>
            <person name="Goldberg J.M."/>
            <person name="Li W."/>
            <person name="Martinez-Rossi N.M."/>
            <person name="Monod M."/>
            <person name="Shelest E."/>
            <person name="Barton R.C."/>
            <person name="Birch E."/>
            <person name="Brakhage A.A."/>
            <person name="Chen Z."/>
            <person name="Gurr S.J."/>
            <person name="Heiman D."/>
            <person name="Heitman J."/>
            <person name="Kosti I."/>
            <person name="Rossi A."/>
            <person name="Saif S."/>
            <person name="Samalova M."/>
            <person name="Saunders C.W."/>
            <person name="Shea T."/>
            <person name="Summerbell R.C."/>
            <person name="Xu J."/>
            <person name="Young S."/>
            <person name="Zeng Q."/>
            <person name="Birren B.W."/>
            <person name="Cuomo C.A."/>
            <person name="White T.C."/>
        </authorList>
    </citation>
    <scope>NUCLEOTIDE SEQUENCE [LARGE SCALE GENOMIC DNA]</scope>
    <source>
        <strain>ATCC MYA-4605 / CBS 113480</strain>
    </source>
</reference>
<evidence type="ECO:0000250" key="1"/>
<evidence type="ECO:0000256" key="2">
    <source>
        <dbReference type="SAM" id="MobiDB-lite"/>
    </source>
</evidence>
<evidence type="ECO:0000305" key="3"/>
<keyword id="KW-0539">Nucleus</keyword>
<keyword id="KW-1185">Reference proteome</keyword>
<keyword id="KW-0687">Ribonucleoprotein</keyword>
<keyword id="KW-0690">Ribosome biogenesis</keyword>
<keyword id="KW-0698">rRNA processing</keyword>
<proteinExistence type="inferred from homology"/>
<feature type="chain" id="PRO_0000408098" description="U3 small nucleolar RNA-associated protein 25">
    <location>
        <begin position="1"/>
        <end position="714"/>
    </location>
</feature>
<feature type="region of interest" description="Disordered" evidence="2">
    <location>
        <begin position="1"/>
        <end position="120"/>
    </location>
</feature>
<feature type="compositionally biased region" description="Basic residues" evidence="2">
    <location>
        <begin position="1"/>
        <end position="23"/>
    </location>
</feature>
<feature type="compositionally biased region" description="Basic and acidic residues" evidence="2">
    <location>
        <begin position="24"/>
        <end position="35"/>
    </location>
</feature>
<feature type="compositionally biased region" description="Low complexity" evidence="2">
    <location>
        <begin position="57"/>
        <end position="66"/>
    </location>
</feature>
<sequence>MAVHHKRAGAHRGRGSKPGRGRGRKFETSRLKDVSEDNSSGDEERANVEPVEEPGDSEGSVVSSGSDLDDQPRENSYSTLLKLLNNDAKSNEPARKKRKIRPNEQHTSLSELPIPVEGDVDPGNELVDMEESEDEIIDDADSHLEDDIDGLVTDGRNDPFESHFGNPDESELSQKIEACSRRWRSIKSDLIDGLYAVACSPDVEQATSVVLPTTPTPVDLKLKRKLARSAISFDPLSTCLTPYIFGYRDTFFCSRTTQNSAKLRDIYCLHALNHVLKTRDRVIKNSAILSKEDGGDIELRDQGFTRPKVLIILPTRQACVRLVDSLTKLFPMEQQENKKRFMDSFSAADNDGWVNKTDDFKELFGGNDDDMFRLGLKFTRKSLKLFSQFYSSDIIIASPLGLRTAIEKEGGKKLENDFLSSIEMVIVDHADALIMQNWEHVEYIFSNLNLQPKEAHGCDFSRVRQWYLDGHAKFLRQTLVFSAFNTPELNALYNSQMQNAFGKAKIMPKYDGAILNLRLPISIKQTFSRFDSLSPLKDPEARFQYFTRTVLANLSRSWTETSSGKGKLGGTLIFIPSYLDFVRVRNHFANSSQTANISFGLISEYTSVQDSSKARSHFMNGRHSVLLYTERAHHFRRYNIRGVSNIIMYGLPDNPIFWGEVVEYLGTAPGGTTTTPTLRVLFSKWDALKLERIVGTARVRSMLLEKGGDTFTFV</sequence>
<name>UTP25_ARTOC</name>
<dbReference type="EMBL" id="DS995709">
    <property type="protein sequence ID" value="EEQ35684.1"/>
    <property type="molecule type" value="Genomic_DNA"/>
</dbReference>
<dbReference type="RefSeq" id="XP_002842672.1">
    <property type="nucleotide sequence ID" value="XM_002842626.1"/>
</dbReference>
<dbReference type="STRING" id="554155.C5G0N1"/>
<dbReference type="GeneID" id="9224105"/>
<dbReference type="VEuPathDB" id="FungiDB:MCYG_08503"/>
<dbReference type="eggNOG" id="KOG2340">
    <property type="taxonomic scope" value="Eukaryota"/>
</dbReference>
<dbReference type="HOGENOM" id="CLU_018705_0_1_1"/>
<dbReference type="OMA" id="QDRGDTF"/>
<dbReference type="OrthoDB" id="10264378at2759"/>
<dbReference type="Proteomes" id="UP000002035">
    <property type="component" value="Unassembled WGS sequence"/>
</dbReference>
<dbReference type="GO" id="GO:0005730">
    <property type="term" value="C:nucleolus"/>
    <property type="evidence" value="ECO:0007669"/>
    <property type="project" value="UniProtKB-SubCell"/>
</dbReference>
<dbReference type="GO" id="GO:0032040">
    <property type="term" value="C:small-subunit processome"/>
    <property type="evidence" value="ECO:0007669"/>
    <property type="project" value="EnsemblFungi"/>
</dbReference>
<dbReference type="GO" id="GO:0019843">
    <property type="term" value="F:rRNA binding"/>
    <property type="evidence" value="ECO:0007669"/>
    <property type="project" value="EnsemblFungi"/>
</dbReference>
<dbReference type="GO" id="GO:0034511">
    <property type="term" value="F:U3 snoRNA binding"/>
    <property type="evidence" value="ECO:0007669"/>
    <property type="project" value="EnsemblFungi"/>
</dbReference>
<dbReference type="GO" id="GO:0000462">
    <property type="term" value="P:maturation of SSU-rRNA from tricistronic rRNA transcript (SSU-rRNA, 5.8S rRNA, LSU-rRNA)"/>
    <property type="evidence" value="ECO:0007669"/>
    <property type="project" value="EnsemblFungi"/>
</dbReference>
<dbReference type="FunFam" id="3.40.50.300:FF:002356">
    <property type="entry name" value="U3 small nucleolar RNA-associated protein 25"/>
    <property type="match status" value="1"/>
</dbReference>
<dbReference type="Gene3D" id="3.40.50.300">
    <property type="entry name" value="P-loop containing nucleotide triphosphate hydrolases"/>
    <property type="match status" value="1"/>
</dbReference>
<dbReference type="InterPro" id="IPR027417">
    <property type="entry name" value="P-loop_NTPase"/>
</dbReference>
<dbReference type="InterPro" id="IPR010678">
    <property type="entry name" value="UTP25"/>
</dbReference>
<dbReference type="InterPro" id="IPR053939">
    <property type="entry name" value="UTP25_C"/>
</dbReference>
<dbReference type="InterPro" id="IPR053940">
    <property type="entry name" value="UTP25_NTPase-like"/>
</dbReference>
<dbReference type="PANTHER" id="PTHR12933">
    <property type="entry name" value="ORF PROTEIN-RELATED"/>
    <property type="match status" value="1"/>
</dbReference>
<dbReference type="PANTHER" id="PTHR12933:SF0">
    <property type="entry name" value="U3 SMALL NUCLEOLAR RNA-ASSOCIATED PROTEIN 25 HOMOLOG"/>
    <property type="match status" value="1"/>
</dbReference>
<dbReference type="Pfam" id="PF06862">
    <property type="entry name" value="Utp25_C"/>
    <property type="match status" value="1"/>
</dbReference>
<dbReference type="Pfam" id="PF22916">
    <property type="entry name" value="UTP25_NTPase-like"/>
    <property type="match status" value="1"/>
</dbReference>
<dbReference type="SUPFAM" id="SSF52540">
    <property type="entry name" value="P-loop containing nucleoside triphosphate hydrolases"/>
    <property type="match status" value="1"/>
</dbReference>